<evidence type="ECO:0000305" key="1"/>
<gene>
    <name type="primary">malQ</name>
    <name type="synonym">malM</name>
    <name type="ordered locus">SP_2107</name>
</gene>
<keyword id="KW-0119">Carbohydrate metabolism</keyword>
<keyword id="KW-0963">Cytoplasm</keyword>
<keyword id="KW-0328">Glycosyltransferase</keyword>
<keyword id="KW-1185">Reference proteome</keyword>
<keyword id="KW-0808">Transferase</keyword>
<protein>
    <recommendedName>
        <fullName>4-alpha-glucanotransferase</fullName>
        <ecNumber>2.4.1.25</ecNumber>
    </recommendedName>
    <alternativeName>
        <fullName>Amylomaltase</fullName>
    </alternativeName>
    <alternativeName>
        <fullName>Disproportionating enzyme</fullName>
        <shortName>D-enzyme</shortName>
    </alternativeName>
</protein>
<proteinExistence type="inferred from homology"/>
<accession>P0A3Q0</accession>
<accession>P29851</accession>
<organism>
    <name type="scientific">Streptococcus pneumoniae serotype 4 (strain ATCC BAA-334 / TIGR4)</name>
    <dbReference type="NCBI Taxonomy" id="170187"/>
    <lineage>
        <taxon>Bacteria</taxon>
        <taxon>Bacillati</taxon>
        <taxon>Bacillota</taxon>
        <taxon>Bacilli</taxon>
        <taxon>Lactobacillales</taxon>
        <taxon>Streptococcaceae</taxon>
        <taxon>Streptococcus</taxon>
    </lineage>
</organism>
<name>MALQ_STRPN</name>
<reference key="1">
    <citation type="journal article" date="1982" name="Cell">
        <title>Identification of base mismatches recognized by the heteroduplex-DNA-repair system of Streptococcus pneumoniae.</title>
        <authorList>
            <person name="Lacks S.A."/>
            <person name="Dunn J.J."/>
            <person name="Greenberg B."/>
        </authorList>
    </citation>
    <scope>NUCLEOTIDE SEQUENCE [GENOMIC DNA]</scope>
</reference>
<reference key="2">
    <citation type="journal article" date="2001" name="Science">
        <title>Complete genome sequence of a virulent isolate of Streptococcus pneumoniae.</title>
        <authorList>
            <person name="Tettelin H."/>
            <person name="Nelson K.E."/>
            <person name="Paulsen I.T."/>
            <person name="Eisen J.A."/>
            <person name="Read T.D."/>
            <person name="Peterson S.N."/>
            <person name="Heidelberg J.F."/>
            <person name="DeBoy R.T."/>
            <person name="Haft D.H."/>
            <person name="Dodson R.J."/>
            <person name="Durkin A.S."/>
            <person name="Gwinn M.L."/>
            <person name="Kolonay J.F."/>
            <person name="Nelson W.C."/>
            <person name="Peterson J.D."/>
            <person name="Umayam L.A."/>
            <person name="White O."/>
            <person name="Salzberg S.L."/>
            <person name="Lewis M.R."/>
            <person name="Radune D."/>
            <person name="Holtzapple E.K."/>
            <person name="Khouri H.M."/>
            <person name="Wolf A.M."/>
            <person name="Utterback T.R."/>
            <person name="Hansen C.L."/>
            <person name="McDonald L.A."/>
            <person name="Feldblyum T.V."/>
            <person name="Angiuoli S.V."/>
            <person name="Dickinson T."/>
            <person name="Hickey E.K."/>
            <person name="Holt I.E."/>
            <person name="Loftus B.J."/>
            <person name="Yang F."/>
            <person name="Smith H.O."/>
            <person name="Venter J.C."/>
            <person name="Dougherty B.A."/>
            <person name="Morrison D.A."/>
            <person name="Hollingshead S.K."/>
            <person name="Fraser C.M."/>
        </authorList>
    </citation>
    <scope>NUCLEOTIDE SEQUENCE [LARGE SCALE GENOMIC DNA]</scope>
    <source>
        <strain>ATCC BAA-334 / TIGR4</strain>
    </source>
</reference>
<dbReference type="EC" id="2.4.1.25"/>
<dbReference type="EMBL" id="J01796">
    <property type="protein sequence ID" value="AAA26923.1"/>
    <property type="molecule type" value="Genomic_DNA"/>
</dbReference>
<dbReference type="EMBL" id="AE005672">
    <property type="protein sequence ID" value="AAK76166.1"/>
    <property type="molecule type" value="Genomic_DNA"/>
</dbReference>
<dbReference type="PIR" id="E95246">
    <property type="entry name" value="E95246"/>
</dbReference>
<dbReference type="RefSeq" id="WP_000747291.1">
    <property type="nucleotide sequence ID" value="NZ_CP155539.1"/>
</dbReference>
<dbReference type="SMR" id="P0A3Q0"/>
<dbReference type="CAZy" id="GH77">
    <property type="family name" value="Glycoside Hydrolase Family 77"/>
</dbReference>
<dbReference type="PaxDb" id="170187-SP_2107"/>
<dbReference type="EnsemblBacteria" id="AAK76166">
    <property type="protein sequence ID" value="AAK76166"/>
    <property type="gene ID" value="SP_2107"/>
</dbReference>
<dbReference type="KEGG" id="spn:SP_2107"/>
<dbReference type="eggNOG" id="COG1640">
    <property type="taxonomic scope" value="Bacteria"/>
</dbReference>
<dbReference type="PhylomeDB" id="P0A3Q0"/>
<dbReference type="BioCyc" id="SPNE170187:G1FZB-2195-MONOMER"/>
<dbReference type="Proteomes" id="UP000000585">
    <property type="component" value="Chromosome"/>
</dbReference>
<dbReference type="GO" id="GO:0005737">
    <property type="term" value="C:cytoplasm"/>
    <property type="evidence" value="ECO:0007669"/>
    <property type="project" value="UniProtKB-SubCell"/>
</dbReference>
<dbReference type="GO" id="GO:0004134">
    <property type="term" value="F:4-alpha-glucanotransferase activity"/>
    <property type="evidence" value="ECO:0007669"/>
    <property type="project" value="UniProtKB-EC"/>
</dbReference>
<dbReference type="GO" id="GO:0005975">
    <property type="term" value="P:carbohydrate metabolic process"/>
    <property type="evidence" value="ECO:0007669"/>
    <property type="project" value="InterPro"/>
</dbReference>
<dbReference type="Gene3D" id="3.20.20.80">
    <property type="entry name" value="Glycosidases"/>
    <property type="match status" value="1"/>
</dbReference>
<dbReference type="InterPro" id="IPR003385">
    <property type="entry name" value="Glyco_hydro_77"/>
</dbReference>
<dbReference type="InterPro" id="IPR017853">
    <property type="entry name" value="Glycoside_hydrolase_SF"/>
</dbReference>
<dbReference type="NCBIfam" id="TIGR00217">
    <property type="entry name" value="malQ"/>
    <property type="match status" value="1"/>
</dbReference>
<dbReference type="NCBIfam" id="NF011078">
    <property type="entry name" value="PRK14508.1-1"/>
    <property type="match status" value="1"/>
</dbReference>
<dbReference type="NCBIfam" id="NF011080">
    <property type="entry name" value="PRK14508.1-3"/>
    <property type="match status" value="1"/>
</dbReference>
<dbReference type="PANTHER" id="PTHR32438">
    <property type="entry name" value="4-ALPHA-GLUCANOTRANSFERASE DPE1, CHLOROPLASTIC/AMYLOPLASTIC"/>
    <property type="match status" value="1"/>
</dbReference>
<dbReference type="PANTHER" id="PTHR32438:SF5">
    <property type="entry name" value="4-ALPHA-GLUCANOTRANSFERASE DPE1, CHLOROPLASTIC_AMYLOPLASTIC"/>
    <property type="match status" value="1"/>
</dbReference>
<dbReference type="Pfam" id="PF02446">
    <property type="entry name" value="Glyco_hydro_77"/>
    <property type="match status" value="1"/>
</dbReference>
<dbReference type="SUPFAM" id="SSF51445">
    <property type="entry name" value="(Trans)glycosidases"/>
    <property type="match status" value="1"/>
</dbReference>
<comment type="catalytic activity">
    <reaction>
        <text>Transfers a segment of a (1-&gt;4)-alpha-D-glucan to a new position in an acceptor, which may be glucose or a (1-&gt;4)-alpha-D-glucan.</text>
        <dbReference type="EC" id="2.4.1.25"/>
    </reaction>
</comment>
<comment type="subcellular location">
    <subcellularLocation>
        <location>Cytoplasm</location>
    </subcellularLocation>
</comment>
<comment type="similarity">
    <text evidence="1">Belongs to the disproportionating enzyme family.</text>
</comment>
<feature type="chain" id="PRO_0000170129" description="4-alpha-glucanotransferase">
    <location>
        <begin position="1"/>
        <end position="505"/>
    </location>
</feature>
<sequence>MKKRQSGVLMHISSLPGAYGIGSFGQSAYDFVDFLVRTKQRYWQILPLGATSYGDSPYQSFSAFAGNTHFIDLDILVEQGLLEASDLEGVDFGSDASEVDYAKIYYARRPLLEKAVKRFFEVGDVKDFEKFAQDNQSWLELFAEYMAIKEYFDNLAWTEWPDADARARKASALESYREQLADKLVYHRVTQYFFFQQWLKLKAYANDNHIEIVGDMPIYVAEDSSDMWANPHLFKTDVNGKATCIAGCPPDEFSVTGQLWGNPIYDWEAMDKDGYKWWIERLRESFKIYDIVRIDHFRGFESYWEIPAGSDTAAPGEWVKGPGYKLFAAVKEELGELNIIAEDLGFMTDEVIELRERTGFPGMKILQFAFNPEDESIDSPHLAPANSVMYTGTHDNNTVLGWYRNEIDDATREYMARYTNRKEYETVVHAMLRTVFSSVSFMAIATMQDLLELDEAARMNFPSTLGGNWSWRMTEDQLTPAVEEGLLDLTTIYRRINENLVDLKK</sequence>